<reference key="1">
    <citation type="submission" date="2009-02" db="EMBL/GenBank/DDBJ databases">
        <title>Genome sequence of Bacillus cereus 03BB102.</title>
        <authorList>
            <person name="Dodson R.J."/>
            <person name="Jackson P."/>
            <person name="Munk A.C."/>
            <person name="Brettin T."/>
            <person name="Bruce D."/>
            <person name="Detter C."/>
            <person name="Tapia R."/>
            <person name="Han C."/>
            <person name="Sutton G."/>
            <person name="Sims D."/>
        </authorList>
    </citation>
    <scope>NUCLEOTIDE SEQUENCE [LARGE SCALE GENOMIC DNA]</scope>
    <source>
        <strain>03BB102</strain>
    </source>
</reference>
<organism>
    <name type="scientific">Bacillus cereus (strain 03BB102)</name>
    <dbReference type="NCBI Taxonomy" id="572264"/>
    <lineage>
        <taxon>Bacteria</taxon>
        <taxon>Bacillati</taxon>
        <taxon>Bacillota</taxon>
        <taxon>Bacilli</taxon>
        <taxon>Bacillales</taxon>
        <taxon>Bacillaceae</taxon>
        <taxon>Bacillus</taxon>
        <taxon>Bacillus cereus group</taxon>
    </lineage>
</organism>
<accession>C1EUU5</accession>
<proteinExistence type="inferred from homology"/>
<keyword id="KW-0067">ATP-binding</keyword>
<keyword id="KW-0963">Cytoplasm</keyword>
<keyword id="KW-0275">Fatty acid biosynthesis</keyword>
<keyword id="KW-0276">Fatty acid metabolism</keyword>
<keyword id="KW-0444">Lipid biosynthesis</keyword>
<keyword id="KW-0443">Lipid metabolism</keyword>
<keyword id="KW-0479">Metal-binding</keyword>
<keyword id="KW-0547">Nucleotide-binding</keyword>
<keyword id="KW-0808">Transferase</keyword>
<keyword id="KW-0862">Zinc</keyword>
<keyword id="KW-0863">Zinc-finger</keyword>
<feature type="chain" id="PRO_0000389672" description="Acetyl-coenzyme A carboxylase carboxyl transferase subunit beta">
    <location>
        <begin position="1"/>
        <end position="289"/>
    </location>
</feature>
<feature type="domain" description="CoA carboxyltransferase N-terminal" evidence="2">
    <location>
        <begin position="28"/>
        <end position="289"/>
    </location>
</feature>
<feature type="zinc finger region" description="C4-type" evidence="1">
    <location>
        <begin position="32"/>
        <end position="54"/>
    </location>
</feature>
<feature type="binding site" evidence="1">
    <location>
        <position position="32"/>
    </location>
    <ligand>
        <name>Zn(2+)</name>
        <dbReference type="ChEBI" id="CHEBI:29105"/>
    </ligand>
</feature>
<feature type="binding site" evidence="1">
    <location>
        <position position="35"/>
    </location>
    <ligand>
        <name>Zn(2+)</name>
        <dbReference type="ChEBI" id="CHEBI:29105"/>
    </ligand>
</feature>
<feature type="binding site" evidence="1">
    <location>
        <position position="51"/>
    </location>
    <ligand>
        <name>Zn(2+)</name>
        <dbReference type="ChEBI" id="CHEBI:29105"/>
    </ligand>
</feature>
<feature type="binding site" evidence="1">
    <location>
        <position position="54"/>
    </location>
    <ligand>
        <name>Zn(2+)</name>
        <dbReference type="ChEBI" id="CHEBI:29105"/>
    </ligand>
</feature>
<dbReference type="EC" id="2.1.3.15" evidence="1"/>
<dbReference type="EMBL" id="CP001407">
    <property type="protein sequence ID" value="ACO29229.1"/>
    <property type="molecule type" value="Genomic_DNA"/>
</dbReference>
<dbReference type="RefSeq" id="WP_000942874.1">
    <property type="nucleotide sequence ID" value="NZ_CP009318.1"/>
</dbReference>
<dbReference type="SMR" id="C1EUU5"/>
<dbReference type="GeneID" id="45024472"/>
<dbReference type="KEGG" id="bcx:BCA_4711"/>
<dbReference type="PATRIC" id="fig|572264.18.peg.4660"/>
<dbReference type="UniPathway" id="UPA00655">
    <property type="reaction ID" value="UER00711"/>
</dbReference>
<dbReference type="Proteomes" id="UP000002210">
    <property type="component" value="Chromosome"/>
</dbReference>
<dbReference type="GO" id="GO:0009317">
    <property type="term" value="C:acetyl-CoA carboxylase complex"/>
    <property type="evidence" value="ECO:0007669"/>
    <property type="project" value="InterPro"/>
</dbReference>
<dbReference type="GO" id="GO:0003989">
    <property type="term" value="F:acetyl-CoA carboxylase activity"/>
    <property type="evidence" value="ECO:0007669"/>
    <property type="project" value="InterPro"/>
</dbReference>
<dbReference type="GO" id="GO:0005524">
    <property type="term" value="F:ATP binding"/>
    <property type="evidence" value="ECO:0007669"/>
    <property type="project" value="UniProtKB-KW"/>
</dbReference>
<dbReference type="GO" id="GO:0016743">
    <property type="term" value="F:carboxyl- or carbamoyltransferase activity"/>
    <property type="evidence" value="ECO:0007669"/>
    <property type="project" value="UniProtKB-UniRule"/>
</dbReference>
<dbReference type="GO" id="GO:0008270">
    <property type="term" value="F:zinc ion binding"/>
    <property type="evidence" value="ECO:0007669"/>
    <property type="project" value="UniProtKB-UniRule"/>
</dbReference>
<dbReference type="GO" id="GO:0006633">
    <property type="term" value="P:fatty acid biosynthetic process"/>
    <property type="evidence" value="ECO:0007669"/>
    <property type="project" value="UniProtKB-KW"/>
</dbReference>
<dbReference type="GO" id="GO:2001295">
    <property type="term" value="P:malonyl-CoA biosynthetic process"/>
    <property type="evidence" value="ECO:0007669"/>
    <property type="project" value="UniProtKB-UniRule"/>
</dbReference>
<dbReference type="Gene3D" id="3.90.226.10">
    <property type="entry name" value="2-enoyl-CoA Hydratase, Chain A, domain 1"/>
    <property type="match status" value="1"/>
</dbReference>
<dbReference type="HAMAP" id="MF_01395">
    <property type="entry name" value="AcetylCoA_CT_beta"/>
    <property type="match status" value="1"/>
</dbReference>
<dbReference type="InterPro" id="IPR034733">
    <property type="entry name" value="AcCoA_carboxyl_beta"/>
</dbReference>
<dbReference type="InterPro" id="IPR000438">
    <property type="entry name" value="Acetyl_CoA_COase_Trfase_b_su"/>
</dbReference>
<dbReference type="InterPro" id="IPR029045">
    <property type="entry name" value="ClpP/crotonase-like_dom_sf"/>
</dbReference>
<dbReference type="InterPro" id="IPR011762">
    <property type="entry name" value="COA_CT_N"/>
</dbReference>
<dbReference type="InterPro" id="IPR041010">
    <property type="entry name" value="Znf-ACC"/>
</dbReference>
<dbReference type="NCBIfam" id="TIGR00515">
    <property type="entry name" value="accD"/>
    <property type="match status" value="1"/>
</dbReference>
<dbReference type="PANTHER" id="PTHR42995">
    <property type="entry name" value="ACETYL-COENZYME A CARBOXYLASE CARBOXYL TRANSFERASE SUBUNIT BETA, CHLOROPLASTIC"/>
    <property type="match status" value="1"/>
</dbReference>
<dbReference type="PANTHER" id="PTHR42995:SF5">
    <property type="entry name" value="ACETYL-COENZYME A CARBOXYLASE CARBOXYL TRANSFERASE SUBUNIT BETA, CHLOROPLASTIC"/>
    <property type="match status" value="1"/>
</dbReference>
<dbReference type="Pfam" id="PF01039">
    <property type="entry name" value="Carboxyl_trans"/>
    <property type="match status" value="1"/>
</dbReference>
<dbReference type="Pfam" id="PF17848">
    <property type="entry name" value="Zn_ribbon_ACC"/>
    <property type="match status" value="1"/>
</dbReference>
<dbReference type="PRINTS" id="PR01070">
    <property type="entry name" value="ACCCTRFRASEB"/>
</dbReference>
<dbReference type="SUPFAM" id="SSF52096">
    <property type="entry name" value="ClpP/crotonase"/>
    <property type="match status" value="1"/>
</dbReference>
<dbReference type="PROSITE" id="PS50980">
    <property type="entry name" value="COA_CT_NTER"/>
    <property type="match status" value="1"/>
</dbReference>
<gene>
    <name evidence="1" type="primary">accD</name>
    <name type="ordered locus">BCA_4711</name>
</gene>
<evidence type="ECO:0000255" key="1">
    <source>
        <dbReference type="HAMAP-Rule" id="MF_01395"/>
    </source>
</evidence>
<evidence type="ECO:0000255" key="2">
    <source>
        <dbReference type="PROSITE-ProRule" id="PRU01136"/>
    </source>
</evidence>
<protein>
    <recommendedName>
        <fullName evidence="1">Acetyl-coenzyme A carboxylase carboxyl transferase subunit beta</fullName>
        <shortName evidence="1">ACCase subunit beta</shortName>
        <shortName evidence="1">Acetyl-CoA carboxylase carboxyltransferase subunit beta</shortName>
        <ecNumber evidence="1">2.1.3.15</ecNumber>
    </recommendedName>
</protein>
<sequence length="289" mass="32281">MLRDLFVKKKKYAAIPSEQVRKDVPDGVMTKCPKCKKIMYTKEVLKNLKVCVNCGYHHPMNAWERLDSILDEGSFREYDKEMVSLNPLEFPNYEEKLESDRKKTELNEAVVTGEGTIDDMLVVVAVMDSRFRMGSMGSVVGEKIARAVEKAYDLQVPFIIFTASGGARMQEGILSLMQMAKTSVALKKHSNAGGLFISVMTHPTTGGVSASFASLGDYNLAEPGALIGFAGRRVIEQTVREKLPEDFQTAEFLLEHGQLDAVVHRDDMRESLRKILEVHQGGEMAVWQS</sequence>
<comment type="function">
    <text evidence="1">Component of the acetyl coenzyme A carboxylase (ACC) complex. Biotin carboxylase (BC) catalyzes the carboxylation of biotin on its carrier protein (BCCP) and then the CO(2) group is transferred by the transcarboxylase to acetyl-CoA to form malonyl-CoA.</text>
</comment>
<comment type="catalytic activity">
    <reaction evidence="1">
        <text>N(6)-carboxybiotinyl-L-lysyl-[protein] + acetyl-CoA = N(6)-biotinyl-L-lysyl-[protein] + malonyl-CoA</text>
        <dbReference type="Rhea" id="RHEA:54728"/>
        <dbReference type="Rhea" id="RHEA-COMP:10505"/>
        <dbReference type="Rhea" id="RHEA-COMP:10506"/>
        <dbReference type="ChEBI" id="CHEBI:57288"/>
        <dbReference type="ChEBI" id="CHEBI:57384"/>
        <dbReference type="ChEBI" id="CHEBI:83144"/>
        <dbReference type="ChEBI" id="CHEBI:83145"/>
        <dbReference type="EC" id="2.1.3.15"/>
    </reaction>
</comment>
<comment type="cofactor">
    <cofactor evidence="1">
        <name>Zn(2+)</name>
        <dbReference type="ChEBI" id="CHEBI:29105"/>
    </cofactor>
    <text evidence="1">Binds 1 zinc ion per subunit.</text>
</comment>
<comment type="pathway">
    <text evidence="1">Lipid metabolism; malonyl-CoA biosynthesis; malonyl-CoA from acetyl-CoA: step 1/1.</text>
</comment>
<comment type="subunit">
    <text evidence="1">Acetyl-CoA carboxylase is a heterohexamer composed of biotin carboxyl carrier protein (AccB), biotin carboxylase (AccC) and two subunits each of ACCase subunit alpha (AccA) and ACCase subunit beta (AccD).</text>
</comment>
<comment type="subcellular location">
    <subcellularLocation>
        <location evidence="1">Cytoplasm</location>
    </subcellularLocation>
</comment>
<comment type="similarity">
    <text evidence="1">Belongs to the AccD/PCCB family.</text>
</comment>
<name>ACCD_BACC3</name>